<evidence type="ECO:0000256" key="1">
    <source>
        <dbReference type="SAM" id="MobiDB-lite"/>
    </source>
</evidence>
<protein>
    <recommendedName>
        <fullName>Putative uncharacterized protein DDB_G0275565</fullName>
    </recommendedName>
</protein>
<accession>Q86HA0</accession>
<accession>Q553L3</accession>
<reference key="1">
    <citation type="journal article" date="2002" name="Nature">
        <title>Sequence and analysis of chromosome 2 of Dictyostelium discoideum.</title>
        <authorList>
            <person name="Gloeckner G."/>
            <person name="Eichinger L."/>
            <person name="Szafranski K."/>
            <person name="Pachebat J.A."/>
            <person name="Bankier A.T."/>
            <person name="Dear P.H."/>
            <person name="Lehmann R."/>
            <person name="Baumgart C."/>
            <person name="Parra G."/>
            <person name="Abril J.F."/>
            <person name="Guigo R."/>
            <person name="Kumpf K."/>
            <person name="Tunggal B."/>
            <person name="Cox E.C."/>
            <person name="Quail M.A."/>
            <person name="Platzer M."/>
            <person name="Rosenthal A."/>
            <person name="Noegel A.A."/>
        </authorList>
    </citation>
    <scope>NUCLEOTIDE SEQUENCE [LARGE SCALE GENOMIC DNA]</scope>
    <source>
        <strain>AX4</strain>
    </source>
</reference>
<reference key="2">
    <citation type="journal article" date="2005" name="Nature">
        <title>The genome of the social amoeba Dictyostelium discoideum.</title>
        <authorList>
            <person name="Eichinger L."/>
            <person name="Pachebat J.A."/>
            <person name="Gloeckner G."/>
            <person name="Rajandream M.A."/>
            <person name="Sucgang R."/>
            <person name="Berriman M."/>
            <person name="Song J."/>
            <person name="Olsen R."/>
            <person name="Szafranski K."/>
            <person name="Xu Q."/>
            <person name="Tunggal B."/>
            <person name="Kummerfeld S."/>
            <person name="Madera M."/>
            <person name="Konfortov B.A."/>
            <person name="Rivero F."/>
            <person name="Bankier A.T."/>
            <person name="Lehmann R."/>
            <person name="Hamlin N."/>
            <person name="Davies R."/>
            <person name="Gaudet P."/>
            <person name="Fey P."/>
            <person name="Pilcher K."/>
            <person name="Chen G."/>
            <person name="Saunders D."/>
            <person name="Sodergren E.J."/>
            <person name="Davis P."/>
            <person name="Kerhornou A."/>
            <person name="Nie X."/>
            <person name="Hall N."/>
            <person name="Anjard C."/>
            <person name="Hemphill L."/>
            <person name="Bason N."/>
            <person name="Farbrother P."/>
            <person name="Desany B."/>
            <person name="Just E."/>
            <person name="Morio T."/>
            <person name="Rost R."/>
            <person name="Churcher C.M."/>
            <person name="Cooper J."/>
            <person name="Haydock S."/>
            <person name="van Driessche N."/>
            <person name="Cronin A."/>
            <person name="Goodhead I."/>
            <person name="Muzny D.M."/>
            <person name="Mourier T."/>
            <person name="Pain A."/>
            <person name="Lu M."/>
            <person name="Harper D."/>
            <person name="Lindsay R."/>
            <person name="Hauser H."/>
            <person name="James K.D."/>
            <person name="Quiles M."/>
            <person name="Madan Babu M."/>
            <person name="Saito T."/>
            <person name="Buchrieser C."/>
            <person name="Wardroper A."/>
            <person name="Felder M."/>
            <person name="Thangavelu M."/>
            <person name="Johnson D."/>
            <person name="Knights A."/>
            <person name="Loulseged H."/>
            <person name="Mungall K.L."/>
            <person name="Oliver K."/>
            <person name="Price C."/>
            <person name="Quail M.A."/>
            <person name="Urushihara H."/>
            <person name="Hernandez J."/>
            <person name="Rabbinowitsch E."/>
            <person name="Steffen D."/>
            <person name="Sanders M."/>
            <person name="Ma J."/>
            <person name="Kohara Y."/>
            <person name="Sharp S."/>
            <person name="Simmonds M.N."/>
            <person name="Spiegler S."/>
            <person name="Tivey A."/>
            <person name="Sugano S."/>
            <person name="White B."/>
            <person name="Walker D."/>
            <person name="Woodward J.R."/>
            <person name="Winckler T."/>
            <person name="Tanaka Y."/>
            <person name="Shaulsky G."/>
            <person name="Schleicher M."/>
            <person name="Weinstock G.M."/>
            <person name="Rosenthal A."/>
            <person name="Cox E.C."/>
            <person name="Chisholm R.L."/>
            <person name="Gibbs R.A."/>
            <person name="Loomis W.F."/>
            <person name="Platzer M."/>
            <person name="Kay R.R."/>
            <person name="Williams J.G."/>
            <person name="Dear P.H."/>
            <person name="Noegel A.A."/>
            <person name="Barrell B.G."/>
            <person name="Kuspa A."/>
        </authorList>
    </citation>
    <scope>NUCLEOTIDE SEQUENCE [LARGE SCALE GENOMIC DNA]</scope>
    <source>
        <strain>AX4</strain>
    </source>
</reference>
<dbReference type="EMBL" id="AAFI02000013">
    <property type="protein sequence ID" value="EAL69533.1"/>
    <property type="molecule type" value="Genomic_DNA"/>
</dbReference>
<dbReference type="RefSeq" id="XP_643400.1">
    <property type="nucleotide sequence ID" value="XM_638308.1"/>
</dbReference>
<dbReference type="EnsemblProtists" id="EAL69533">
    <property type="protein sequence ID" value="EAL69533"/>
    <property type="gene ID" value="DDB_G0275565"/>
</dbReference>
<dbReference type="GeneID" id="8619986"/>
<dbReference type="KEGG" id="ddi:DDB_G0275565"/>
<dbReference type="dictyBase" id="DDB_G0275565"/>
<dbReference type="HOGENOM" id="CLU_2854353_0_0_1"/>
<dbReference type="InParanoid" id="Q86HA0"/>
<dbReference type="PRO" id="PR:Q86HA0"/>
<dbReference type="Proteomes" id="UP000002195">
    <property type="component" value="Chromosome 2"/>
</dbReference>
<feature type="chain" id="PRO_0000348123" description="Putative uncharacterized protein DDB_G0275565">
    <location>
        <begin position="1"/>
        <end position="65"/>
    </location>
</feature>
<feature type="region of interest" description="Disordered" evidence="1">
    <location>
        <begin position="24"/>
        <end position="65"/>
    </location>
</feature>
<proteinExistence type="predicted"/>
<name>Y7291_DICDI</name>
<keyword id="KW-1185">Reference proteome</keyword>
<sequence>MLSNGLKIDQEKKFFILIIIIINNNNNNNNNNNNNNNNNNNNNNNNNNNNNNNNKNNKNNNKNND</sequence>
<gene>
    <name type="ORF">DDB_G0275565</name>
</gene>
<organism>
    <name type="scientific">Dictyostelium discoideum</name>
    <name type="common">Social amoeba</name>
    <dbReference type="NCBI Taxonomy" id="44689"/>
    <lineage>
        <taxon>Eukaryota</taxon>
        <taxon>Amoebozoa</taxon>
        <taxon>Evosea</taxon>
        <taxon>Eumycetozoa</taxon>
        <taxon>Dictyostelia</taxon>
        <taxon>Dictyosteliales</taxon>
        <taxon>Dictyosteliaceae</taxon>
        <taxon>Dictyostelium</taxon>
    </lineage>
</organism>